<keyword id="KW-0489">Methyltransferase</keyword>
<keyword id="KW-1185">Reference proteome</keyword>
<keyword id="KW-0949">S-adenosyl-L-methionine</keyword>
<keyword id="KW-0808">Transferase</keyword>
<keyword id="KW-0819">tRNA processing</keyword>
<comment type="function">
    <text evidence="2">Catalyzes the formation of N(7)-methylguanine at position 46 (m7G46) in tRNA.</text>
</comment>
<comment type="catalytic activity">
    <reaction evidence="2">
        <text>guanosine(46) in tRNA + S-adenosyl-L-methionine = N(7)-methylguanosine(46) in tRNA + S-adenosyl-L-homocysteine</text>
        <dbReference type="Rhea" id="RHEA:42708"/>
        <dbReference type="Rhea" id="RHEA-COMP:10188"/>
        <dbReference type="Rhea" id="RHEA-COMP:10189"/>
        <dbReference type="ChEBI" id="CHEBI:57856"/>
        <dbReference type="ChEBI" id="CHEBI:59789"/>
        <dbReference type="ChEBI" id="CHEBI:74269"/>
        <dbReference type="ChEBI" id="CHEBI:74480"/>
        <dbReference type="EC" id="2.1.1.33"/>
    </reaction>
</comment>
<comment type="pathway">
    <text evidence="2">tRNA modification; N(7)-methylguanine-tRNA biosynthesis.</text>
</comment>
<comment type="subunit">
    <text evidence="2">Monomer.</text>
</comment>
<comment type="similarity">
    <text evidence="2">Belongs to the class I-like SAM-binding methyltransferase superfamily. TrmB family.</text>
</comment>
<dbReference type="EC" id="2.1.1.33" evidence="2"/>
<dbReference type="EMBL" id="CP000800">
    <property type="protein sequence ID" value="ABV19744.1"/>
    <property type="molecule type" value="Genomic_DNA"/>
</dbReference>
<dbReference type="RefSeq" id="WP_000786911.1">
    <property type="nucleotide sequence ID" value="NC_009801.1"/>
</dbReference>
<dbReference type="SMR" id="A7ZR85"/>
<dbReference type="GeneID" id="93779031"/>
<dbReference type="KEGG" id="ecw:EcE24377A_3305"/>
<dbReference type="HOGENOM" id="CLU_050910_0_1_6"/>
<dbReference type="UniPathway" id="UPA00989"/>
<dbReference type="Proteomes" id="UP000001122">
    <property type="component" value="Chromosome"/>
</dbReference>
<dbReference type="GO" id="GO:0043527">
    <property type="term" value="C:tRNA methyltransferase complex"/>
    <property type="evidence" value="ECO:0007669"/>
    <property type="project" value="TreeGrafter"/>
</dbReference>
<dbReference type="GO" id="GO:0008176">
    <property type="term" value="F:tRNA (guanine(46)-N7)-methyltransferase activity"/>
    <property type="evidence" value="ECO:0007669"/>
    <property type="project" value="UniProtKB-UniRule"/>
</dbReference>
<dbReference type="FunFam" id="3.40.50.150:FF:000024">
    <property type="entry name" value="tRNA (guanine-N(7)-)-methyltransferase"/>
    <property type="match status" value="1"/>
</dbReference>
<dbReference type="Gene3D" id="3.40.50.150">
    <property type="entry name" value="Vaccinia Virus protein VP39"/>
    <property type="match status" value="1"/>
</dbReference>
<dbReference type="HAMAP" id="MF_01057">
    <property type="entry name" value="tRNA_methyltr_TrmB"/>
    <property type="match status" value="1"/>
</dbReference>
<dbReference type="InterPro" id="IPR029063">
    <property type="entry name" value="SAM-dependent_MTases_sf"/>
</dbReference>
<dbReference type="InterPro" id="IPR003358">
    <property type="entry name" value="tRNA_(Gua-N-7)_MeTrfase_Trmb"/>
</dbReference>
<dbReference type="InterPro" id="IPR055361">
    <property type="entry name" value="tRNA_methyltr_TrmB_bact"/>
</dbReference>
<dbReference type="NCBIfam" id="TIGR00091">
    <property type="entry name" value="tRNA (guanosine(46)-N7)-methyltransferase TrmB"/>
    <property type="match status" value="1"/>
</dbReference>
<dbReference type="PANTHER" id="PTHR23417">
    <property type="entry name" value="3-DEOXY-D-MANNO-OCTULOSONIC-ACID TRANSFERASE/TRNA GUANINE-N 7 - -METHYLTRANSFERASE"/>
    <property type="match status" value="1"/>
</dbReference>
<dbReference type="PANTHER" id="PTHR23417:SF14">
    <property type="entry name" value="PENTACOTRIPEPTIDE-REPEAT REGION OF PRORP DOMAIN-CONTAINING PROTEIN"/>
    <property type="match status" value="1"/>
</dbReference>
<dbReference type="Pfam" id="PF02390">
    <property type="entry name" value="Methyltransf_4"/>
    <property type="match status" value="1"/>
</dbReference>
<dbReference type="SUPFAM" id="SSF53335">
    <property type="entry name" value="S-adenosyl-L-methionine-dependent methyltransferases"/>
    <property type="match status" value="1"/>
</dbReference>
<dbReference type="PROSITE" id="PS51625">
    <property type="entry name" value="SAM_MT_TRMB"/>
    <property type="match status" value="1"/>
</dbReference>
<name>TRMB_ECO24</name>
<protein>
    <recommendedName>
        <fullName evidence="2">tRNA (guanine-N(7)-)-methyltransferase</fullName>
        <ecNumber evidence="2">2.1.1.33</ecNumber>
    </recommendedName>
    <alternativeName>
        <fullName evidence="2">tRNA (guanine(46)-N(7))-methyltransferase</fullName>
    </alternativeName>
    <alternativeName>
        <fullName evidence="2">tRNA(m7G46)-methyltransferase</fullName>
    </alternativeName>
</protein>
<accession>A7ZR85</accession>
<gene>
    <name evidence="2" type="primary">trmB</name>
    <name type="ordered locus">EcE24377A_3305</name>
</gene>
<reference key="1">
    <citation type="journal article" date="2008" name="J. Bacteriol.">
        <title>The pangenome structure of Escherichia coli: comparative genomic analysis of E. coli commensal and pathogenic isolates.</title>
        <authorList>
            <person name="Rasko D.A."/>
            <person name="Rosovitz M.J."/>
            <person name="Myers G.S.A."/>
            <person name="Mongodin E.F."/>
            <person name="Fricke W.F."/>
            <person name="Gajer P."/>
            <person name="Crabtree J."/>
            <person name="Sebaihia M."/>
            <person name="Thomson N.R."/>
            <person name="Chaudhuri R."/>
            <person name="Henderson I.R."/>
            <person name="Sperandio V."/>
            <person name="Ravel J."/>
        </authorList>
    </citation>
    <scope>NUCLEOTIDE SEQUENCE [LARGE SCALE GENOMIC DNA]</scope>
    <source>
        <strain>E24377A / ETEC</strain>
    </source>
</reference>
<feature type="chain" id="PRO_1000064391" description="tRNA (guanine-N(7)-)-methyltransferase">
    <location>
        <begin position="1"/>
        <end position="239"/>
    </location>
</feature>
<feature type="region of interest" description="Interaction with RNA" evidence="2">
    <location>
        <begin position="150"/>
        <end position="155"/>
    </location>
</feature>
<feature type="active site" evidence="1">
    <location>
        <position position="144"/>
    </location>
</feature>
<feature type="binding site" evidence="2">
    <location>
        <position position="69"/>
    </location>
    <ligand>
        <name>S-adenosyl-L-methionine</name>
        <dbReference type="ChEBI" id="CHEBI:59789"/>
    </ligand>
</feature>
<feature type="binding site" evidence="2">
    <location>
        <position position="94"/>
    </location>
    <ligand>
        <name>S-adenosyl-L-methionine</name>
        <dbReference type="ChEBI" id="CHEBI:59789"/>
    </ligand>
</feature>
<feature type="binding site" evidence="2">
    <location>
        <position position="121"/>
    </location>
    <ligand>
        <name>S-adenosyl-L-methionine</name>
        <dbReference type="ChEBI" id="CHEBI:59789"/>
    </ligand>
</feature>
<feature type="binding site" evidence="2">
    <location>
        <position position="144"/>
    </location>
    <ligand>
        <name>S-adenosyl-L-methionine</name>
        <dbReference type="ChEBI" id="CHEBI:59789"/>
    </ligand>
</feature>
<feature type="binding site" evidence="2">
    <location>
        <position position="148"/>
    </location>
    <ligand>
        <name>substrate</name>
    </ligand>
</feature>
<feature type="binding site" evidence="2">
    <location>
        <position position="180"/>
    </location>
    <ligand>
        <name>substrate</name>
    </ligand>
</feature>
<feature type="binding site" evidence="2">
    <location>
        <begin position="217"/>
        <end position="220"/>
    </location>
    <ligand>
        <name>substrate</name>
    </ligand>
</feature>
<evidence type="ECO:0000250" key="1"/>
<evidence type="ECO:0000255" key="2">
    <source>
        <dbReference type="HAMAP-Rule" id="MF_01057"/>
    </source>
</evidence>
<proteinExistence type="inferred from homology"/>
<organism>
    <name type="scientific">Escherichia coli O139:H28 (strain E24377A / ETEC)</name>
    <dbReference type="NCBI Taxonomy" id="331111"/>
    <lineage>
        <taxon>Bacteria</taxon>
        <taxon>Pseudomonadati</taxon>
        <taxon>Pseudomonadota</taxon>
        <taxon>Gammaproteobacteria</taxon>
        <taxon>Enterobacterales</taxon>
        <taxon>Enterobacteriaceae</taxon>
        <taxon>Escherichia</taxon>
    </lineage>
</organism>
<sequence length="239" mass="27307">MKNDVISPEFDENGRPLRRIRSFVRRQGRLTKGQEHALENYWPVMGVEFSEDMLDFPALFGREAPVTLEIGFGMGASLVAMAKDRPEQDFLGIEVHSPGVGACLASAHEEGLSNLRVMCHDAVEVLHKMIPDNSLRMVQLFFPDPWHKARHNKRRIVQVPFAELVKSKLQLGGVFHMATDWEPYAEHMLEVMSSIDGYKNLSESNDYVPRPASRPVTKFEQRGHRLGHGVWDLMFERVK</sequence>